<comment type="subunit">
    <text evidence="1">Forms oligomers.</text>
</comment>
<comment type="subcellular location">
    <subcellularLocation>
        <location evidence="1">Cytoplasm</location>
        <location evidence="1">Nucleoid</location>
    </subcellularLocation>
</comment>
<comment type="similarity">
    <text evidence="1">Belongs to the MraZ family.</text>
</comment>
<reference key="1">
    <citation type="journal article" date="2004" name="Nucleic Acids Res.">
        <title>Genome sequence of Symbiobacterium thermophilum, an uncultivable bacterium that depends on microbial commensalism.</title>
        <authorList>
            <person name="Ueda K."/>
            <person name="Yamashita A."/>
            <person name="Ishikawa J."/>
            <person name="Shimada M."/>
            <person name="Watsuji T."/>
            <person name="Morimura K."/>
            <person name="Ikeda H."/>
            <person name="Hattori M."/>
            <person name="Beppu T."/>
        </authorList>
    </citation>
    <scope>NUCLEOTIDE SEQUENCE [LARGE SCALE GENOMIC DNA]</scope>
    <source>
        <strain>DSM 24528 / JCM 14929 / IAM 14863 / T</strain>
    </source>
</reference>
<dbReference type="EMBL" id="AP006840">
    <property type="protein sequence ID" value="BAD40185.1"/>
    <property type="molecule type" value="Genomic_DNA"/>
</dbReference>
<dbReference type="SMR" id="Q67Q58"/>
<dbReference type="STRING" id="292459.STH1200"/>
<dbReference type="KEGG" id="sth:STH1200"/>
<dbReference type="eggNOG" id="COG2001">
    <property type="taxonomic scope" value="Bacteria"/>
</dbReference>
<dbReference type="HOGENOM" id="CLU_107907_0_5_9"/>
<dbReference type="Proteomes" id="UP000000417">
    <property type="component" value="Chromosome"/>
</dbReference>
<dbReference type="GO" id="GO:0005737">
    <property type="term" value="C:cytoplasm"/>
    <property type="evidence" value="ECO:0007669"/>
    <property type="project" value="UniProtKB-UniRule"/>
</dbReference>
<dbReference type="GO" id="GO:0009295">
    <property type="term" value="C:nucleoid"/>
    <property type="evidence" value="ECO:0007669"/>
    <property type="project" value="UniProtKB-SubCell"/>
</dbReference>
<dbReference type="GO" id="GO:0003700">
    <property type="term" value="F:DNA-binding transcription factor activity"/>
    <property type="evidence" value="ECO:0007669"/>
    <property type="project" value="UniProtKB-UniRule"/>
</dbReference>
<dbReference type="GO" id="GO:0000976">
    <property type="term" value="F:transcription cis-regulatory region binding"/>
    <property type="evidence" value="ECO:0007669"/>
    <property type="project" value="TreeGrafter"/>
</dbReference>
<dbReference type="GO" id="GO:2000143">
    <property type="term" value="P:negative regulation of DNA-templated transcription initiation"/>
    <property type="evidence" value="ECO:0007669"/>
    <property type="project" value="TreeGrafter"/>
</dbReference>
<dbReference type="CDD" id="cd16321">
    <property type="entry name" value="MraZ_C"/>
    <property type="match status" value="1"/>
</dbReference>
<dbReference type="CDD" id="cd16320">
    <property type="entry name" value="MraZ_N"/>
    <property type="match status" value="1"/>
</dbReference>
<dbReference type="FunFam" id="3.40.1550.20:FF:000002">
    <property type="entry name" value="Transcriptional regulator MraZ"/>
    <property type="match status" value="1"/>
</dbReference>
<dbReference type="Gene3D" id="3.40.1550.20">
    <property type="entry name" value="Transcriptional regulator MraZ domain"/>
    <property type="match status" value="1"/>
</dbReference>
<dbReference type="HAMAP" id="MF_01008">
    <property type="entry name" value="MraZ"/>
    <property type="match status" value="1"/>
</dbReference>
<dbReference type="InterPro" id="IPR003444">
    <property type="entry name" value="MraZ"/>
</dbReference>
<dbReference type="InterPro" id="IPR035644">
    <property type="entry name" value="MraZ_C"/>
</dbReference>
<dbReference type="InterPro" id="IPR020603">
    <property type="entry name" value="MraZ_dom"/>
</dbReference>
<dbReference type="InterPro" id="IPR035642">
    <property type="entry name" value="MraZ_N"/>
</dbReference>
<dbReference type="InterPro" id="IPR038619">
    <property type="entry name" value="MraZ_sf"/>
</dbReference>
<dbReference type="InterPro" id="IPR007159">
    <property type="entry name" value="SpoVT-AbrB_dom"/>
</dbReference>
<dbReference type="InterPro" id="IPR037914">
    <property type="entry name" value="SpoVT-AbrB_sf"/>
</dbReference>
<dbReference type="NCBIfam" id="TIGR00242">
    <property type="entry name" value="division/cell wall cluster transcriptional repressor MraZ"/>
    <property type="match status" value="1"/>
</dbReference>
<dbReference type="PANTHER" id="PTHR34701">
    <property type="entry name" value="TRANSCRIPTIONAL REGULATOR MRAZ"/>
    <property type="match status" value="1"/>
</dbReference>
<dbReference type="PANTHER" id="PTHR34701:SF1">
    <property type="entry name" value="TRANSCRIPTIONAL REGULATOR MRAZ"/>
    <property type="match status" value="1"/>
</dbReference>
<dbReference type="Pfam" id="PF02381">
    <property type="entry name" value="MraZ"/>
    <property type="match status" value="2"/>
</dbReference>
<dbReference type="SUPFAM" id="SSF89447">
    <property type="entry name" value="AbrB/MazE/MraZ-like"/>
    <property type="match status" value="1"/>
</dbReference>
<dbReference type="PROSITE" id="PS51740">
    <property type="entry name" value="SPOVT_ABRB"/>
    <property type="match status" value="2"/>
</dbReference>
<keyword id="KW-0963">Cytoplasm</keyword>
<keyword id="KW-0238">DNA-binding</keyword>
<keyword id="KW-1185">Reference proteome</keyword>
<keyword id="KW-0677">Repeat</keyword>
<keyword id="KW-0804">Transcription</keyword>
<keyword id="KW-0805">Transcription regulation</keyword>
<name>MRAZ_SYMTH</name>
<protein>
    <recommendedName>
        <fullName>Transcriptional regulator MraZ</fullName>
    </recommendedName>
</protein>
<gene>
    <name evidence="1" type="primary">mraZ</name>
    <name type="ordered locus">STH1200</name>
</gene>
<proteinExistence type="inferred from homology"/>
<sequence length="138" mass="15386">MGEFQHAIDAKGRLIIPAKLREGLGERFIATKGLDRCLFVFPLAEFEAVSQKLRGLGMSSSAARAFNRLFFSGATECELDPQGRILLPANLREYAGIQKDCVIVGVENRVEIWAAERWAEYSEEAGELYTEIAEKLGF</sequence>
<accession>Q67Q58</accession>
<evidence type="ECO:0000255" key="1">
    <source>
        <dbReference type="HAMAP-Rule" id="MF_01008"/>
    </source>
</evidence>
<evidence type="ECO:0000255" key="2">
    <source>
        <dbReference type="PROSITE-ProRule" id="PRU01076"/>
    </source>
</evidence>
<organism>
    <name type="scientific">Symbiobacterium thermophilum (strain DSM 24528 / JCM 14929 / IAM 14863 / T)</name>
    <dbReference type="NCBI Taxonomy" id="292459"/>
    <lineage>
        <taxon>Bacteria</taxon>
        <taxon>Bacillati</taxon>
        <taxon>Bacillota</taxon>
        <taxon>Clostridia</taxon>
        <taxon>Eubacteriales</taxon>
        <taxon>Symbiobacteriaceae</taxon>
        <taxon>Symbiobacterium</taxon>
    </lineage>
</organism>
<feature type="chain" id="PRO_0000108547" description="Transcriptional regulator MraZ">
    <location>
        <begin position="1"/>
        <end position="138"/>
    </location>
</feature>
<feature type="domain" description="SpoVT-AbrB 1" evidence="2">
    <location>
        <begin position="3"/>
        <end position="45"/>
    </location>
</feature>
<feature type="domain" description="SpoVT-AbrB 2" evidence="2">
    <location>
        <begin position="74"/>
        <end position="117"/>
    </location>
</feature>